<gene>
    <name type="primary">alr1</name>
    <name type="ordered locus">CA_C0492</name>
</gene>
<protein>
    <recommendedName>
        <fullName evidence="1">Alanine racemase 1</fullName>
        <ecNumber evidence="1">5.1.1.1</ecNumber>
    </recommendedName>
</protein>
<sequence>MFRHIRPVWAEIDLDNIAYNMQQIRRCSKSDEIIGVVKADAYGHGAVDVAPVLLENGANRLAVAVISEAVELRKSGIQCPIMILGYTPLSLVDSIIKYSIEQTVFSYDYAEKLSEAARQKNITLRIHIALDTGMGRIGFLPTEESVWEVYKISKLSNIIIEGIFSHFSTSDETNKEYTYAQLKKFEWFYNELRKKNIKINIRHIGNSAAIMELPETHFEATRPGIILYGYYPSNEVDKNKLNLKPIMTLKTNVVHIKKMMPGEYVSYGRKFKCERESIIATLPVGYADGYTRMLSGKAKVIINGNYAPVIGRICMDQCMIDITDLPSVQVGDEVVIMGESDDKKFTADDMAEIIGTINYEVICMISKRVPRVYIKNGEVVKIRNYV</sequence>
<keyword id="KW-0413">Isomerase</keyword>
<keyword id="KW-0663">Pyridoxal phosphate</keyword>
<keyword id="KW-1185">Reference proteome</keyword>
<comment type="function">
    <text evidence="1">Catalyzes the interconversion of L-alanine and D-alanine. May also act on other amino acids.</text>
</comment>
<comment type="catalytic activity">
    <reaction evidence="1">
        <text>L-alanine = D-alanine</text>
        <dbReference type="Rhea" id="RHEA:20249"/>
        <dbReference type="ChEBI" id="CHEBI:57416"/>
        <dbReference type="ChEBI" id="CHEBI:57972"/>
        <dbReference type="EC" id="5.1.1.1"/>
    </reaction>
</comment>
<comment type="cofactor">
    <cofactor evidence="1">
        <name>pyridoxal 5'-phosphate</name>
        <dbReference type="ChEBI" id="CHEBI:597326"/>
    </cofactor>
</comment>
<comment type="pathway">
    <text evidence="1">Amino-acid biosynthesis; D-alanine biosynthesis; D-alanine from L-alanine: step 1/1.</text>
</comment>
<comment type="similarity">
    <text evidence="1">Belongs to the alanine racemase family.</text>
</comment>
<feature type="chain" id="PRO_0000114509" description="Alanine racemase 1">
    <location>
        <begin position="1"/>
        <end position="386"/>
    </location>
</feature>
<feature type="active site" description="Proton acceptor; specific for D-alanine" evidence="1">
    <location>
        <position position="38"/>
    </location>
</feature>
<feature type="active site" description="Proton acceptor; specific for L-alanine" evidence="1">
    <location>
        <position position="267"/>
    </location>
</feature>
<feature type="binding site" evidence="1">
    <location>
        <position position="136"/>
    </location>
    <ligand>
        <name>substrate</name>
    </ligand>
</feature>
<feature type="binding site" evidence="1">
    <location>
        <position position="315"/>
    </location>
    <ligand>
        <name>substrate</name>
    </ligand>
</feature>
<feature type="modified residue" description="N6-(pyridoxal phosphate)lysine" evidence="1">
    <location>
        <position position="38"/>
    </location>
</feature>
<evidence type="ECO:0000255" key="1">
    <source>
        <dbReference type="HAMAP-Rule" id="MF_01201"/>
    </source>
</evidence>
<proteinExistence type="inferred from homology"/>
<name>ALR1_CLOAB</name>
<dbReference type="EC" id="5.1.1.1" evidence="1"/>
<dbReference type="EMBL" id="AE001437">
    <property type="protein sequence ID" value="AAK78472.1"/>
    <property type="molecule type" value="Genomic_DNA"/>
</dbReference>
<dbReference type="PIR" id="E96960">
    <property type="entry name" value="E96960"/>
</dbReference>
<dbReference type="RefSeq" id="NP_347132.1">
    <property type="nucleotide sequence ID" value="NC_003030.1"/>
</dbReference>
<dbReference type="SMR" id="Q97LR2"/>
<dbReference type="STRING" id="272562.CA_C0492"/>
<dbReference type="KEGG" id="cac:CA_C0492"/>
<dbReference type="PATRIC" id="fig|272562.8.peg.691"/>
<dbReference type="eggNOG" id="COG0787">
    <property type="taxonomic scope" value="Bacteria"/>
</dbReference>
<dbReference type="HOGENOM" id="CLU_028393_2_2_9"/>
<dbReference type="OrthoDB" id="9813814at2"/>
<dbReference type="UniPathway" id="UPA00042">
    <property type="reaction ID" value="UER00497"/>
</dbReference>
<dbReference type="Proteomes" id="UP000000814">
    <property type="component" value="Chromosome"/>
</dbReference>
<dbReference type="GO" id="GO:0005829">
    <property type="term" value="C:cytosol"/>
    <property type="evidence" value="ECO:0007669"/>
    <property type="project" value="TreeGrafter"/>
</dbReference>
<dbReference type="GO" id="GO:0008784">
    <property type="term" value="F:alanine racemase activity"/>
    <property type="evidence" value="ECO:0007669"/>
    <property type="project" value="UniProtKB-UniRule"/>
</dbReference>
<dbReference type="GO" id="GO:0030170">
    <property type="term" value="F:pyridoxal phosphate binding"/>
    <property type="evidence" value="ECO:0007669"/>
    <property type="project" value="UniProtKB-UniRule"/>
</dbReference>
<dbReference type="GO" id="GO:0030632">
    <property type="term" value="P:D-alanine biosynthetic process"/>
    <property type="evidence" value="ECO:0007669"/>
    <property type="project" value="UniProtKB-UniRule"/>
</dbReference>
<dbReference type="GO" id="GO:0009252">
    <property type="term" value="P:peptidoglycan biosynthetic process"/>
    <property type="evidence" value="ECO:0007669"/>
    <property type="project" value="TreeGrafter"/>
</dbReference>
<dbReference type="CDD" id="cd00430">
    <property type="entry name" value="PLPDE_III_AR"/>
    <property type="match status" value="1"/>
</dbReference>
<dbReference type="FunFam" id="2.40.37.10:FF:000006">
    <property type="entry name" value="Alanine racemase"/>
    <property type="match status" value="1"/>
</dbReference>
<dbReference type="FunFam" id="3.20.20.10:FF:000002">
    <property type="entry name" value="Alanine racemase"/>
    <property type="match status" value="1"/>
</dbReference>
<dbReference type="Gene3D" id="3.20.20.10">
    <property type="entry name" value="Alanine racemase"/>
    <property type="match status" value="1"/>
</dbReference>
<dbReference type="Gene3D" id="2.40.37.10">
    <property type="entry name" value="Lyase, Ornithine Decarboxylase, Chain A, domain 1"/>
    <property type="match status" value="1"/>
</dbReference>
<dbReference type="HAMAP" id="MF_01201">
    <property type="entry name" value="Ala_racemase"/>
    <property type="match status" value="1"/>
</dbReference>
<dbReference type="InterPro" id="IPR000821">
    <property type="entry name" value="Ala_racemase"/>
</dbReference>
<dbReference type="InterPro" id="IPR009006">
    <property type="entry name" value="Ala_racemase/Decarboxylase_C"/>
</dbReference>
<dbReference type="InterPro" id="IPR011079">
    <property type="entry name" value="Ala_racemase_C"/>
</dbReference>
<dbReference type="InterPro" id="IPR001608">
    <property type="entry name" value="Ala_racemase_N"/>
</dbReference>
<dbReference type="InterPro" id="IPR020622">
    <property type="entry name" value="Ala_racemase_pyridoxalP-BS"/>
</dbReference>
<dbReference type="InterPro" id="IPR029066">
    <property type="entry name" value="PLP-binding_barrel"/>
</dbReference>
<dbReference type="NCBIfam" id="TIGR00492">
    <property type="entry name" value="alr"/>
    <property type="match status" value="1"/>
</dbReference>
<dbReference type="PANTHER" id="PTHR30511">
    <property type="entry name" value="ALANINE RACEMASE"/>
    <property type="match status" value="1"/>
</dbReference>
<dbReference type="PANTHER" id="PTHR30511:SF0">
    <property type="entry name" value="ALANINE RACEMASE, CATABOLIC-RELATED"/>
    <property type="match status" value="1"/>
</dbReference>
<dbReference type="Pfam" id="PF00842">
    <property type="entry name" value="Ala_racemase_C"/>
    <property type="match status" value="1"/>
</dbReference>
<dbReference type="Pfam" id="PF01168">
    <property type="entry name" value="Ala_racemase_N"/>
    <property type="match status" value="1"/>
</dbReference>
<dbReference type="PRINTS" id="PR00992">
    <property type="entry name" value="ALARACEMASE"/>
</dbReference>
<dbReference type="SMART" id="SM01005">
    <property type="entry name" value="Ala_racemase_C"/>
    <property type="match status" value="1"/>
</dbReference>
<dbReference type="SUPFAM" id="SSF50621">
    <property type="entry name" value="Alanine racemase C-terminal domain-like"/>
    <property type="match status" value="1"/>
</dbReference>
<dbReference type="SUPFAM" id="SSF51419">
    <property type="entry name" value="PLP-binding barrel"/>
    <property type="match status" value="1"/>
</dbReference>
<dbReference type="PROSITE" id="PS00395">
    <property type="entry name" value="ALANINE_RACEMASE"/>
    <property type="match status" value="1"/>
</dbReference>
<accession>Q97LR2</accession>
<organism>
    <name type="scientific">Clostridium acetobutylicum (strain ATCC 824 / DSM 792 / JCM 1419 / IAM 19013 / LMG 5710 / NBRC 13948 / NRRL B-527 / VKM B-1787 / 2291 / W)</name>
    <dbReference type="NCBI Taxonomy" id="272562"/>
    <lineage>
        <taxon>Bacteria</taxon>
        <taxon>Bacillati</taxon>
        <taxon>Bacillota</taxon>
        <taxon>Clostridia</taxon>
        <taxon>Eubacteriales</taxon>
        <taxon>Clostridiaceae</taxon>
        <taxon>Clostridium</taxon>
    </lineage>
</organism>
<reference key="1">
    <citation type="journal article" date="2001" name="J. Bacteriol.">
        <title>Genome sequence and comparative analysis of the solvent-producing bacterium Clostridium acetobutylicum.</title>
        <authorList>
            <person name="Noelling J."/>
            <person name="Breton G."/>
            <person name="Omelchenko M.V."/>
            <person name="Makarova K.S."/>
            <person name="Zeng Q."/>
            <person name="Gibson R."/>
            <person name="Lee H.M."/>
            <person name="Dubois J."/>
            <person name="Qiu D."/>
            <person name="Hitti J."/>
            <person name="Wolf Y.I."/>
            <person name="Tatusov R.L."/>
            <person name="Sabathe F."/>
            <person name="Doucette-Stamm L.A."/>
            <person name="Soucaille P."/>
            <person name="Daly M.J."/>
            <person name="Bennett G.N."/>
            <person name="Koonin E.V."/>
            <person name="Smith D.R."/>
        </authorList>
    </citation>
    <scope>NUCLEOTIDE SEQUENCE [LARGE SCALE GENOMIC DNA]</scope>
    <source>
        <strain>ATCC 824 / DSM 792 / JCM 1419 / IAM 19013 / LMG 5710 / NBRC 13948 / NRRL B-527 / VKM B-1787 / 2291 / W</strain>
    </source>
</reference>